<accession>B1YU27</accession>
<comment type="similarity">
    <text evidence="1">Belongs to the UPF0301 (AlgH) family.</text>
</comment>
<protein>
    <recommendedName>
        <fullName evidence="1">UPF0301 protein BamMC406_0754</fullName>
    </recommendedName>
</protein>
<proteinExistence type="inferred from homology"/>
<dbReference type="EMBL" id="CP001025">
    <property type="protein sequence ID" value="ACB63250.1"/>
    <property type="molecule type" value="Genomic_DNA"/>
</dbReference>
<dbReference type="RefSeq" id="WP_006751106.1">
    <property type="nucleotide sequence ID" value="NC_010551.1"/>
</dbReference>
<dbReference type="SMR" id="B1YU27"/>
<dbReference type="KEGG" id="bac:BamMC406_0754"/>
<dbReference type="HOGENOM" id="CLU_057596_1_0_4"/>
<dbReference type="OrthoDB" id="9807486at2"/>
<dbReference type="Proteomes" id="UP000001680">
    <property type="component" value="Chromosome 1"/>
</dbReference>
<dbReference type="GO" id="GO:0005829">
    <property type="term" value="C:cytosol"/>
    <property type="evidence" value="ECO:0007669"/>
    <property type="project" value="TreeGrafter"/>
</dbReference>
<dbReference type="Gene3D" id="3.40.1740.10">
    <property type="entry name" value="VC0467-like"/>
    <property type="match status" value="1"/>
</dbReference>
<dbReference type="HAMAP" id="MF_00758">
    <property type="entry name" value="UPF0301"/>
    <property type="match status" value="1"/>
</dbReference>
<dbReference type="InterPro" id="IPR003774">
    <property type="entry name" value="AlgH-like"/>
</dbReference>
<dbReference type="NCBIfam" id="NF001266">
    <property type="entry name" value="PRK00228.1-1"/>
    <property type="match status" value="1"/>
</dbReference>
<dbReference type="NCBIfam" id="NF001267">
    <property type="entry name" value="PRK00228.1-2"/>
    <property type="match status" value="1"/>
</dbReference>
<dbReference type="PANTHER" id="PTHR30327">
    <property type="entry name" value="UNCHARACTERIZED PROTEIN YQGE"/>
    <property type="match status" value="1"/>
</dbReference>
<dbReference type="PANTHER" id="PTHR30327:SF1">
    <property type="entry name" value="UPF0301 PROTEIN YQGE"/>
    <property type="match status" value="1"/>
</dbReference>
<dbReference type="Pfam" id="PF02622">
    <property type="entry name" value="DUF179"/>
    <property type="match status" value="1"/>
</dbReference>
<dbReference type="SUPFAM" id="SSF143456">
    <property type="entry name" value="VC0467-like"/>
    <property type="match status" value="1"/>
</dbReference>
<feature type="chain" id="PRO_1000198255" description="UPF0301 protein BamMC406_0754">
    <location>
        <begin position="1"/>
        <end position="192"/>
    </location>
</feature>
<name>Y754_BURA4</name>
<sequence length="192" mass="20683">MSKPSDRINLTNQFLIAMPNMADPTFSGTVVYLCDHSERGALGLVINRPTDIDLESLFNRIDLKLDIEPLLHIPVYFGGPVQTERGFVLHEPVEGANYNSSMSVEGGLEMTTSKDVLEAVATGTGPKRFLLTLGHAGWGAGQLEEEISRNGWLTVAADPRIVFDTPAEERFEAALGLLGVSSSMLSGEAGHA</sequence>
<gene>
    <name type="ordered locus">BamMC406_0754</name>
</gene>
<organism>
    <name type="scientific">Burkholderia ambifaria (strain MC40-6)</name>
    <dbReference type="NCBI Taxonomy" id="398577"/>
    <lineage>
        <taxon>Bacteria</taxon>
        <taxon>Pseudomonadati</taxon>
        <taxon>Pseudomonadota</taxon>
        <taxon>Betaproteobacteria</taxon>
        <taxon>Burkholderiales</taxon>
        <taxon>Burkholderiaceae</taxon>
        <taxon>Burkholderia</taxon>
        <taxon>Burkholderia cepacia complex</taxon>
    </lineage>
</organism>
<evidence type="ECO:0000255" key="1">
    <source>
        <dbReference type="HAMAP-Rule" id="MF_00758"/>
    </source>
</evidence>
<reference key="1">
    <citation type="submission" date="2008-04" db="EMBL/GenBank/DDBJ databases">
        <title>Complete sequence of chromosome 1 of Burkholderia ambifaria MC40-6.</title>
        <authorList>
            <person name="Copeland A."/>
            <person name="Lucas S."/>
            <person name="Lapidus A."/>
            <person name="Glavina del Rio T."/>
            <person name="Dalin E."/>
            <person name="Tice H."/>
            <person name="Pitluck S."/>
            <person name="Chain P."/>
            <person name="Malfatti S."/>
            <person name="Shin M."/>
            <person name="Vergez L."/>
            <person name="Lang D."/>
            <person name="Schmutz J."/>
            <person name="Larimer F."/>
            <person name="Land M."/>
            <person name="Hauser L."/>
            <person name="Kyrpides N."/>
            <person name="Lykidis A."/>
            <person name="Ramette A."/>
            <person name="Konstantinidis K."/>
            <person name="Tiedje J."/>
            <person name="Richardson P."/>
        </authorList>
    </citation>
    <scope>NUCLEOTIDE SEQUENCE [LARGE SCALE GENOMIC DNA]</scope>
    <source>
        <strain>MC40-6</strain>
    </source>
</reference>